<protein>
    <recommendedName>
        <fullName evidence="7">Voltage-gated potassium channel KCNC4</fullName>
    </recommendedName>
    <alternativeName>
        <fullName>Potassium voltage-gated channel subfamily C member 4</fullName>
    </alternativeName>
    <alternativeName>
        <fullName>Voltage-gated potassium channel subunit Kv3.4</fullName>
    </alternativeName>
</protein>
<proteinExistence type="evidence at transcript level"/>
<reference key="1">
    <citation type="journal article" date="2004" name="Genome Res.">
        <title>The status, quality, and expansion of the NIH full-length cDNA project: the Mammalian Gene Collection (MGC).</title>
        <authorList>
            <consortium name="The MGC Project Team"/>
        </authorList>
    </citation>
    <scope>NUCLEOTIDE SEQUENCE [LARGE SCALE MRNA]</scope>
    <source>
        <tissue>Eye</tissue>
    </source>
</reference>
<sequence length="628" mass="68655">MISSVCVSSYRGRKSGNKPPSKTCLKEEMAKGEASEKIIINVGGTRHETYRSTLRTLPGTRLAWLADPDGGGRPESDGGGAGSSGSSGGGGGGGGCEFFFDRHPGVFAYVLNYYRTGKLHCPADVCGPLFEEELTFWGIDETDVEPCCWMTYRQHRDAEEALDIFESPDGGGGGAGPGDEAGDDERELALQRLGPHEGGSGPGAGSGGCRGWQPRMWALFEDPYSSRAARVVAFASLFFILVSITTFCLETHEAFNIDRNVTEIHRVGNITSVRFRREVETEPILTYIEGVCVMWFTLEFLVRIVCCPDTLDFVKNLLNIIDFVAILPFYLEVGLSGLSSKAARDVLGFLRVVRFVRILRIFKLTRHFVGLRVLGHTLRASTNEFLLLIIFLALGVLIFATMIYYAERIGARPSDPRGNDHTDFKNIPIGFWWAVVTMTTLGYGDMYPKTWSGMLVGALCALAGVLTIAMPVPVIVNNFGMYYSLAMAKQKLPKKRKKHVPRPPQLESPIYCKSEETSPRDSTYSDTSPPAREEGVVERKRADSKQNGDANAVLSDEEGAGLTQPLALAPTPEERRALRRSGTRDRNKKAAACFLLSAGDYACADGSVRKEGNVEPKACVPVSHTCAL</sequence>
<evidence type="ECO:0000250" key="1"/>
<evidence type="ECO:0000250" key="2">
    <source>
        <dbReference type="UniProtKB" id="P48547"/>
    </source>
</evidence>
<evidence type="ECO:0000250" key="3">
    <source>
        <dbReference type="UniProtKB" id="Q03721"/>
    </source>
</evidence>
<evidence type="ECO:0000250" key="4">
    <source>
        <dbReference type="UniProtKB" id="Q63734"/>
    </source>
</evidence>
<evidence type="ECO:0000255" key="5"/>
<evidence type="ECO:0000256" key="6">
    <source>
        <dbReference type="SAM" id="MobiDB-lite"/>
    </source>
</evidence>
<evidence type="ECO:0000305" key="7"/>
<evidence type="ECO:0000312" key="8">
    <source>
        <dbReference type="MGI" id="MGI:96670"/>
    </source>
</evidence>
<keyword id="KW-0325">Glycoprotein</keyword>
<keyword id="KW-0407">Ion channel</keyword>
<keyword id="KW-0406">Ion transport</keyword>
<keyword id="KW-0472">Membrane</keyword>
<keyword id="KW-0479">Metal-binding</keyword>
<keyword id="KW-0597">Phosphoprotein</keyword>
<keyword id="KW-0630">Potassium</keyword>
<keyword id="KW-0631">Potassium channel</keyword>
<keyword id="KW-0633">Potassium transport</keyword>
<keyword id="KW-1185">Reference proteome</keyword>
<keyword id="KW-0812">Transmembrane</keyword>
<keyword id="KW-1133">Transmembrane helix</keyword>
<keyword id="KW-0813">Transport</keyword>
<keyword id="KW-0851">Voltage-gated channel</keyword>
<keyword id="KW-0862">Zinc</keyword>
<accession>Q8R1C0</accession>
<dbReference type="EMBL" id="BC024837">
    <property type="protein sequence ID" value="AAH24837.1"/>
    <property type="molecule type" value="mRNA"/>
</dbReference>
<dbReference type="CCDS" id="CCDS17738.1"/>
<dbReference type="RefSeq" id="NP_666034.1">
    <property type="nucleotide sequence ID" value="NM_145922.4"/>
</dbReference>
<dbReference type="SMR" id="Q8R1C0"/>
<dbReference type="CORUM" id="Q8R1C0"/>
<dbReference type="FunCoup" id="Q8R1C0">
    <property type="interactions" value="182"/>
</dbReference>
<dbReference type="STRING" id="10090.ENSMUSP00000009617"/>
<dbReference type="GlyCosmos" id="Q8R1C0">
    <property type="glycosylation" value="2 sites, No reported glycans"/>
</dbReference>
<dbReference type="GlyGen" id="Q8R1C0">
    <property type="glycosylation" value="3 sites, 2 N-linked glycans (2 sites)"/>
</dbReference>
<dbReference type="iPTMnet" id="Q8R1C0"/>
<dbReference type="PhosphoSitePlus" id="Q8R1C0"/>
<dbReference type="SwissPalm" id="Q8R1C0"/>
<dbReference type="PaxDb" id="10090-ENSMUSP00000009617"/>
<dbReference type="ProteomicsDB" id="263399"/>
<dbReference type="ABCD" id="Q8R1C0">
    <property type="antibodies" value="1 sequenced antibody"/>
</dbReference>
<dbReference type="Antibodypedia" id="3094">
    <property type="antibodies" value="320 antibodies from 31 providers"/>
</dbReference>
<dbReference type="DNASU" id="99738"/>
<dbReference type="Ensembl" id="ENSMUST00000009617.10">
    <property type="protein sequence ID" value="ENSMUSP00000009617.9"/>
    <property type="gene ID" value="ENSMUSG00000027895.11"/>
</dbReference>
<dbReference type="GeneID" id="99738"/>
<dbReference type="KEGG" id="mmu:99738"/>
<dbReference type="UCSC" id="uc008qxa.1">
    <property type="organism name" value="mouse"/>
</dbReference>
<dbReference type="AGR" id="MGI:96670"/>
<dbReference type="CTD" id="3749"/>
<dbReference type="MGI" id="MGI:96670">
    <property type="gene designation" value="Kcnc4"/>
</dbReference>
<dbReference type="VEuPathDB" id="HostDB:ENSMUSG00000027895"/>
<dbReference type="eggNOG" id="KOG3713">
    <property type="taxonomic scope" value="Eukaryota"/>
</dbReference>
<dbReference type="GeneTree" id="ENSGT00940000158860"/>
<dbReference type="HOGENOM" id="CLU_011722_4_3_1"/>
<dbReference type="InParanoid" id="Q8R1C0"/>
<dbReference type="OMA" id="RIGANPT"/>
<dbReference type="OrthoDB" id="10025005at2759"/>
<dbReference type="PhylomeDB" id="Q8R1C0"/>
<dbReference type="TreeFam" id="TF352511"/>
<dbReference type="Reactome" id="R-MMU-1296072">
    <property type="pathway name" value="Voltage gated Potassium channels"/>
</dbReference>
<dbReference type="BioGRID-ORCS" id="99738">
    <property type="hits" value="4 hits in 79 CRISPR screens"/>
</dbReference>
<dbReference type="PRO" id="PR:Q8R1C0"/>
<dbReference type="Proteomes" id="UP000000589">
    <property type="component" value="Chromosome 3"/>
</dbReference>
<dbReference type="RNAct" id="Q8R1C0">
    <property type="molecule type" value="protein"/>
</dbReference>
<dbReference type="Bgee" id="ENSMUSG00000027895">
    <property type="expression patterns" value="Expressed in olfactory epithelium and 119 other cell types or tissues"/>
</dbReference>
<dbReference type="ExpressionAtlas" id="Q8R1C0">
    <property type="expression patterns" value="baseline and differential"/>
</dbReference>
<dbReference type="GO" id="GO:0043679">
    <property type="term" value="C:axon terminus"/>
    <property type="evidence" value="ECO:0000314"/>
    <property type="project" value="MGI"/>
</dbReference>
<dbReference type="GO" id="GO:0031594">
    <property type="term" value="C:neuromuscular junction"/>
    <property type="evidence" value="ECO:0000314"/>
    <property type="project" value="MGI"/>
</dbReference>
<dbReference type="GO" id="GO:0008076">
    <property type="term" value="C:voltage-gated potassium channel complex"/>
    <property type="evidence" value="ECO:0007669"/>
    <property type="project" value="InterPro"/>
</dbReference>
<dbReference type="GO" id="GO:0046872">
    <property type="term" value="F:metal ion binding"/>
    <property type="evidence" value="ECO:0007669"/>
    <property type="project" value="UniProtKB-KW"/>
</dbReference>
<dbReference type="GO" id="GO:0005249">
    <property type="term" value="F:voltage-gated potassium channel activity"/>
    <property type="evidence" value="ECO:0000250"/>
    <property type="project" value="UniProtKB"/>
</dbReference>
<dbReference type="GO" id="GO:0051260">
    <property type="term" value="P:protein homooligomerization"/>
    <property type="evidence" value="ECO:0007669"/>
    <property type="project" value="InterPro"/>
</dbReference>
<dbReference type="GO" id="GO:0046928">
    <property type="term" value="P:regulation of neurotransmitter secretion"/>
    <property type="evidence" value="ECO:0000315"/>
    <property type="project" value="MGI"/>
</dbReference>
<dbReference type="CDD" id="cd18415">
    <property type="entry name" value="BTB_KCNC2_4"/>
    <property type="match status" value="1"/>
</dbReference>
<dbReference type="FunFam" id="1.10.287.70:FF:000011">
    <property type="entry name" value="Potassium channel, voltage-gated Shaw-related subfamily C, member 4"/>
    <property type="match status" value="1"/>
</dbReference>
<dbReference type="FunFam" id="1.20.120.350:FF:000014">
    <property type="entry name" value="Potassium channel, voltage-gated Shaw-related subfamily C, member 4"/>
    <property type="match status" value="1"/>
</dbReference>
<dbReference type="FunFam" id="3.30.710.10:FF:000062">
    <property type="entry name" value="potassium voltage-gated channel subfamily C member 4 isoform X2"/>
    <property type="match status" value="1"/>
</dbReference>
<dbReference type="Gene3D" id="1.10.287.70">
    <property type="match status" value="1"/>
</dbReference>
<dbReference type="Gene3D" id="3.30.710.10">
    <property type="entry name" value="Potassium Channel Kv1.1, Chain A"/>
    <property type="match status" value="1"/>
</dbReference>
<dbReference type="Gene3D" id="1.20.120.350">
    <property type="entry name" value="Voltage-gated potassium channels. Chain C"/>
    <property type="match status" value="1"/>
</dbReference>
<dbReference type="InterPro" id="IPR000210">
    <property type="entry name" value="BTB/POZ_dom"/>
</dbReference>
<dbReference type="InterPro" id="IPR005821">
    <property type="entry name" value="Ion_trans_dom"/>
</dbReference>
<dbReference type="InterPro" id="IPR003968">
    <property type="entry name" value="K_chnl_volt-dep_Kv"/>
</dbReference>
<dbReference type="InterPro" id="IPR003974">
    <property type="entry name" value="K_chnl_volt-dep_Kv3"/>
</dbReference>
<dbReference type="InterPro" id="IPR005405">
    <property type="entry name" value="K_chnl_volt-dep_Kv3.4"/>
</dbReference>
<dbReference type="InterPro" id="IPR021645">
    <property type="entry name" value="Shal-type_N"/>
</dbReference>
<dbReference type="InterPro" id="IPR011333">
    <property type="entry name" value="SKP1/BTB/POZ_sf"/>
</dbReference>
<dbReference type="InterPro" id="IPR003131">
    <property type="entry name" value="T1-type_BTB"/>
</dbReference>
<dbReference type="InterPro" id="IPR028325">
    <property type="entry name" value="VG_K_chnl"/>
</dbReference>
<dbReference type="InterPro" id="IPR027359">
    <property type="entry name" value="Volt_channel_dom_sf"/>
</dbReference>
<dbReference type="PANTHER" id="PTHR11537:SF126">
    <property type="entry name" value="POTASSIUM VOLTAGE-GATED CHANNEL SUBFAMILY C MEMBER 4"/>
    <property type="match status" value="1"/>
</dbReference>
<dbReference type="PANTHER" id="PTHR11537">
    <property type="entry name" value="VOLTAGE-GATED POTASSIUM CHANNEL"/>
    <property type="match status" value="1"/>
</dbReference>
<dbReference type="Pfam" id="PF02214">
    <property type="entry name" value="BTB_2"/>
    <property type="match status" value="1"/>
</dbReference>
<dbReference type="Pfam" id="PF00520">
    <property type="entry name" value="Ion_trans"/>
    <property type="match status" value="1"/>
</dbReference>
<dbReference type="Pfam" id="PF11601">
    <property type="entry name" value="Shal-type"/>
    <property type="match status" value="1"/>
</dbReference>
<dbReference type="PRINTS" id="PR00169">
    <property type="entry name" value="KCHANNEL"/>
</dbReference>
<dbReference type="PRINTS" id="PR01583">
    <property type="entry name" value="KV34CHANNEL"/>
</dbReference>
<dbReference type="PRINTS" id="PR01491">
    <property type="entry name" value="KVCHANNEL"/>
</dbReference>
<dbReference type="PRINTS" id="PR01498">
    <property type="entry name" value="SHAWCHANNEL"/>
</dbReference>
<dbReference type="SMART" id="SM00225">
    <property type="entry name" value="BTB"/>
    <property type="match status" value="1"/>
</dbReference>
<dbReference type="SUPFAM" id="SSF54695">
    <property type="entry name" value="POZ domain"/>
    <property type="match status" value="1"/>
</dbReference>
<dbReference type="SUPFAM" id="SSF81324">
    <property type="entry name" value="Voltage-gated potassium channels"/>
    <property type="match status" value="1"/>
</dbReference>
<feature type="chain" id="PRO_0000054059" description="Voltage-gated potassium channel KCNC4">
    <location>
        <begin position="1"/>
        <end position="628"/>
    </location>
</feature>
<feature type="topological domain" description="Cytoplasmic" evidence="5">
    <location>
        <begin position="1"/>
        <end position="230"/>
    </location>
</feature>
<feature type="transmembrane region" description="Helical; Name=Segment S1" evidence="5">
    <location>
        <begin position="231"/>
        <end position="251"/>
    </location>
</feature>
<feature type="transmembrane region" description="Helical; Name=Segment S2" evidence="5">
    <location>
        <begin position="282"/>
        <end position="302"/>
    </location>
</feature>
<feature type="topological domain" description="Cytoplasmic" evidence="5">
    <location>
        <begin position="303"/>
        <end position="316"/>
    </location>
</feature>
<feature type="transmembrane region" description="Helical; Name=Segment S3" evidence="5">
    <location>
        <begin position="317"/>
        <end position="337"/>
    </location>
</feature>
<feature type="transmembrane region" description="Helical; Voltage-sensor; Name=Segment S4" evidence="5">
    <location>
        <begin position="349"/>
        <end position="368"/>
    </location>
</feature>
<feature type="topological domain" description="Cytoplasmic" evidence="5">
    <location>
        <begin position="369"/>
        <end position="384"/>
    </location>
</feature>
<feature type="transmembrane region" description="Helical; Name=Segment S5" evidence="5">
    <location>
        <begin position="385"/>
        <end position="405"/>
    </location>
</feature>
<feature type="transmembrane region" description="Helical; Name=Segment S6" evidence="5">
    <location>
        <begin position="456"/>
        <end position="476"/>
    </location>
</feature>
<feature type="topological domain" description="Cytoplasmic" evidence="5">
    <location>
        <begin position="477"/>
        <end position="628"/>
    </location>
</feature>
<feature type="region of interest" description="Inactivation gate">
    <location>
        <begin position="1"/>
        <end position="28"/>
    </location>
</feature>
<feature type="region of interest" description="Disordered" evidence="6">
    <location>
        <begin position="1"/>
        <end position="24"/>
    </location>
</feature>
<feature type="region of interest" description="Disordered" evidence="6">
    <location>
        <begin position="62"/>
        <end position="88"/>
    </location>
</feature>
<feature type="region of interest" description="Disordered" evidence="6">
    <location>
        <begin position="493"/>
        <end position="584"/>
    </location>
</feature>
<feature type="short sequence motif" description="Selectivity filter" evidence="1">
    <location>
        <begin position="440"/>
        <end position="445"/>
    </location>
</feature>
<feature type="compositionally biased region" description="Gly residues" evidence="6">
    <location>
        <begin position="77"/>
        <end position="88"/>
    </location>
</feature>
<feature type="compositionally biased region" description="Basic and acidic residues" evidence="6">
    <location>
        <begin position="531"/>
        <end position="546"/>
    </location>
</feature>
<feature type="binding site" evidence="2">
    <location>
        <position position="120"/>
    </location>
    <ligand>
        <name>Zn(2+)</name>
        <dbReference type="ChEBI" id="CHEBI:29105"/>
    </ligand>
</feature>
<feature type="binding site" evidence="2">
    <location>
        <position position="126"/>
    </location>
    <ligand>
        <name>Zn(2+)</name>
        <dbReference type="ChEBI" id="CHEBI:29105"/>
    </ligand>
</feature>
<feature type="binding site" evidence="2">
    <location>
        <position position="147"/>
    </location>
    <ligand>
        <name>Zn(2+)</name>
        <dbReference type="ChEBI" id="CHEBI:29105"/>
    </ligand>
</feature>
<feature type="binding site" evidence="2">
    <location>
        <position position="148"/>
    </location>
    <ligand>
        <name>Zn(2+)</name>
        <dbReference type="ChEBI" id="CHEBI:29105"/>
    </ligand>
</feature>
<feature type="binding site" evidence="2">
    <location>
        <position position="440"/>
    </location>
    <ligand>
        <name>K(+)</name>
        <dbReference type="ChEBI" id="CHEBI:29103"/>
        <note>ligand shared between homotetrameric partners</note>
    </ligand>
</feature>
<feature type="binding site" evidence="2">
    <location>
        <position position="441"/>
    </location>
    <ligand>
        <name>K(+)</name>
        <dbReference type="ChEBI" id="CHEBI:29103"/>
        <note>ligand shared between homotetrameric partners</note>
    </ligand>
</feature>
<feature type="binding site" evidence="2">
    <location>
        <position position="442"/>
    </location>
    <ligand>
        <name>K(+)</name>
        <dbReference type="ChEBI" id="CHEBI:29103"/>
        <note>ligand shared between homotetrameric partners</note>
    </ligand>
</feature>
<feature type="binding site" evidence="2">
    <location>
        <position position="443"/>
    </location>
    <ligand>
        <name>K(+)</name>
        <dbReference type="ChEBI" id="CHEBI:29103"/>
        <note>ligand shared between homotetrameric partners</note>
    </ligand>
</feature>
<feature type="modified residue" description="Phosphoserine" evidence="3">
    <location>
        <position position="8"/>
    </location>
</feature>
<feature type="modified residue" description="Phosphoserine" evidence="3">
    <location>
        <position position="9"/>
    </location>
</feature>
<feature type="modified residue" description="Phosphoserine" evidence="3">
    <location>
        <position position="15"/>
    </location>
</feature>
<feature type="modified residue" description="Phosphoserine" evidence="3">
    <location>
        <position position="21"/>
    </location>
</feature>
<feature type="glycosylation site" description="N-linked (GlcNAc...) asparagine" evidence="5">
    <location>
        <position position="260"/>
    </location>
</feature>
<feature type="glycosylation site" description="N-linked (GlcNAc...) asparagine" evidence="5">
    <location>
        <position position="269"/>
    </location>
</feature>
<name>KCNC4_MOUSE</name>
<organism>
    <name type="scientific">Mus musculus</name>
    <name type="common">Mouse</name>
    <dbReference type="NCBI Taxonomy" id="10090"/>
    <lineage>
        <taxon>Eukaryota</taxon>
        <taxon>Metazoa</taxon>
        <taxon>Chordata</taxon>
        <taxon>Craniata</taxon>
        <taxon>Vertebrata</taxon>
        <taxon>Euteleostomi</taxon>
        <taxon>Mammalia</taxon>
        <taxon>Eutheria</taxon>
        <taxon>Euarchontoglires</taxon>
        <taxon>Glires</taxon>
        <taxon>Rodentia</taxon>
        <taxon>Myomorpha</taxon>
        <taxon>Muroidea</taxon>
        <taxon>Muridae</taxon>
        <taxon>Murinae</taxon>
        <taxon>Mus</taxon>
        <taxon>Mus</taxon>
    </lineage>
</organism>
<gene>
    <name evidence="8" type="primary">Kcnc4</name>
</gene>
<comment type="function">
    <text evidence="3">Voltage-gated potassium channel that opens in response to the voltage difference across the membrane, forming a potassium-selective channel through which potassium ions pass in accordance with their electrochemical gradient. The channel displays rapid activation and inactivation kinetics.</text>
</comment>
<comment type="catalytic activity">
    <reaction evidence="3">
        <text>K(+)(in) = K(+)(out)</text>
        <dbReference type="Rhea" id="RHEA:29463"/>
        <dbReference type="ChEBI" id="CHEBI:29103"/>
    </reaction>
</comment>
<comment type="subunit">
    <text evidence="4 7">Homotetramer (Probable). Heterotetramer of potassium channel proteins (By similarity).</text>
</comment>
<comment type="subcellular location">
    <subcellularLocation>
        <location>Membrane</location>
        <topology>Multi-pass membrane protein</topology>
    </subcellularLocation>
</comment>
<comment type="domain">
    <text evidence="3">The cytoplasmic N-terminus mediates N-type inactivation.</text>
</comment>
<comment type="domain">
    <text evidence="4">Composed of the tetramerization T1 domain, six membrane spanning regions including voltage-sensing (S1-S4) and pore domains (S5- S6) and a variable C-terminal domain.</text>
</comment>
<comment type="PTM">
    <text evidence="3">Phosphorylation of serine residues in the inactivation gate inhibits rapid channel closure.</text>
</comment>
<comment type="similarity">
    <text evidence="7">Belongs to the potassium channel family. C (Shaw) (TC 1.A.1.2) subfamily. Kv3.4/KCNC4 sub-subfamily.</text>
</comment>